<name>RL16_DESOH</name>
<protein>
    <recommendedName>
        <fullName evidence="1">Large ribosomal subunit protein uL16</fullName>
    </recommendedName>
    <alternativeName>
        <fullName evidence="3">50S ribosomal protein L16</fullName>
    </alternativeName>
</protein>
<accession>A8ZV64</accession>
<comment type="function">
    <text evidence="1">Binds 23S rRNA and is also seen to make contacts with the A and possibly P site tRNAs.</text>
</comment>
<comment type="subunit">
    <text evidence="1">Part of the 50S ribosomal subunit.</text>
</comment>
<comment type="similarity">
    <text evidence="1">Belongs to the universal ribosomal protein uL16 family.</text>
</comment>
<reference key="1">
    <citation type="submission" date="2007-10" db="EMBL/GenBank/DDBJ databases">
        <title>Complete sequence of Desulfococcus oleovorans Hxd3.</title>
        <authorList>
            <consortium name="US DOE Joint Genome Institute"/>
            <person name="Copeland A."/>
            <person name="Lucas S."/>
            <person name="Lapidus A."/>
            <person name="Barry K."/>
            <person name="Glavina del Rio T."/>
            <person name="Dalin E."/>
            <person name="Tice H."/>
            <person name="Pitluck S."/>
            <person name="Kiss H."/>
            <person name="Brettin T."/>
            <person name="Bruce D."/>
            <person name="Detter J.C."/>
            <person name="Han C."/>
            <person name="Schmutz J."/>
            <person name="Larimer F."/>
            <person name="Land M."/>
            <person name="Hauser L."/>
            <person name="Kyrpides N."/>
            <person name="Kim E."/>
            <person name="Wawrik B."/>
            <person name="Richardson P."/>
        </authorList>
    </citation>
    <scope>NUCLEOTIDE SEQUENCE [LARGE SCALE GENOMIC DNA]</scope>
    <source>
        <strain>DSM 6200 / JCM 39069 / Hxd3</strain>
    </source>
</reference>
<proteinExistence type="inferred from homology"/>
<sequence length="137" mass="15418">MLSPKKVKFRKQQRGRRTGTRLAGSTLSFGEFGLQATECGMITARQIEAARIAMTRYIKRAGKTWIRIFPDKPFTKKPAEVRMGKGKGAPEGWAAVIRPGRILYEMDGVPDELAREAFRLAAHKLPVKTKFVKRETA</sequence>
<keyword id="KW-1185">Reference proteome</keyword>
<keyword id="KW-0687">Ribonucleoprotein</keyword>
<keyword id="KW-0689">Ribosomal protein</keyword>
<keyword id="KW-0694">RNA-binding</keyword>
<keyword id="KW-0699">rRNA-binding</keyword>
<keyword id="KW-0820">tRNA-binding</keyword>
<evidence type="ECO:0000255" key="1">
    <source>
        <dbReference type="HAMAP-Rule" id="MF_01342"/>
    </source>
</evidence>
<evidence type="ECO:0000256" key="2">
    <source>
        <dbReference type="SAM" id="MobiDB-lite"/>
    </source>
</evidence>
<evidence type="ECO:0000305" key="3"/>
<organism>
    <name type="scientific">Desulfosudis oleivorans (strain DSM 6200 / JCM 39069 / Hxd3)</name>
    <name type="common">Desulfococcus oleovorans</name>
    <dbReference type="NCBI Taxonomy" id="96561"/>
    <lineage>
        <taxon>Bacteria</taxon>
        <taxon>Pseudomonadati</taxon>
        <taxon>Thermodesulfobacteriota</taxon>
        <taxon>Desulfobacteria</taxon>
        <taxon>Desulfobacterales</taxon>
        <taxon>Desulfosudaceae</taxon>
        <taxon>Desulfosudis</taxon>
    </lineage>
</organism>
<feature type="chain" id="PRO_1000142961" description="Large ribosomal subunit protein uL16">
    <location>
        <begin position="1"/>
        <end position="137"/>
    </location>
</feature>
<feature type="region of interest" description="Disordered" evidence="2">
    <location>
        <begin position="1"/>
        <end position="20"/>
    </location>
</feature>
<feature type="compositionally biased region" description="Basic residues" evidence="2">
    <location>
        <begin position="1"/>
        <end position="19"/>
    </location>
</feature>
<gene>
    <name evidence="1" type="primary">rplP</name>
    <name type="ordered locus">Dole_0715</name>
</gene>
<dbReference type="EMBL" id="CP000859">
    <property type="protein sequence ID" value="ABW66525.1"/>
    <property type="molecule type" value="Genomic_DNA"/>
</dbReference>
<dbReference type="RefSeq" id="WP_012174143.1">
    <property type="nucleotide sequence ID" value="NC_009943.1"/>
</dbReference>
<dbReference type="SMR" id="A8ZV64"/>
<dbReference type="STRING" id="96561.Dole_0715"/>
<dbReference type="KEGG" id="dol:Dole_0715"/>
<dbReference type="eggNOG" id="COG0197">
    <property type="taxonomic scope" value="Bacteria"/>
</dbReference>
<dbReference type="HOGENOM" id="CLU_078858_2_1_7"/>
<dbReference type="OrthoDB" id="9802589at2"/>
<dbReference type="Proteomes" id="UP000008561">
    <property type="component" value="Chromosome"/>
</dbReference>
<dbReference type="GO" id="GO:0022625">
    <property type="term" value="C:cytosolic large ribosomal subunit"/>
    <property type="evidence" value="ECO:0007669"/>
    <property type="project" value="TreeGrafter"/>
</dbReference>
<dbReference type="GO" id="GO:0019843">
    <property type="term" value="F:rRNA binding"/>
    <property type="evidence" value="ECO:0007669"/>
    <property type="project" value="UniProtKB-UniRule"/>
</dbReference>
<dbReference type="GO" id="GO:0003735">
    <property type="term" value="F:structural constituent of ribosome"/>
    <property type="evidence" value="ECO:0007669"/>
    <property type="project" value="InterPro"/>
</dbReference>
<dbReference type="GO" id="GO:0000049">
    <property type="term" value="F:tRNA binding"/>
    <property type="evidence" value="ECO:0007669"/>
    <property type="project" value="UniProtKB-KW"/>
</dbReference>
<dbReference type="GO" id="GO:0006412">
    <property type="term" value="P:translation"/>
    <property type="evidence" value="ECO:0007669"/>
    <property type="project" value="UniProtKB-UniRule"/>
</dbReference>
<dbReference type="CDD" id="cd01433">
    <property type="entry name" value="Ribosomal_L16_L10e"/>
    <property type="match status" value="1"/>
</dbReference>
<dbReference type="FunFam" id="3.90.1170.10:FF:000001">
    <property type="entry name" value="50S ribosomal protein L16"/>
    <property type="match status" value="1"/>
</dbReference>
<dbReference type="Gene3D" id="3.90.1170.10">
    <property type="entry name" value="Ribosomal protein L10e/L16"/>
    <property type="match status" value="1"/>
</dbReference>
<dbReference type="HAMAP" id="MF_01342">
    <property type="entry name" value="Ribosomal_uL16"/>
    <property type="match status" value="1"/>
</dbReference>
<dbReference type="InterPro" id="IPR047873">
    <property type="entry name" value="Ribosomal_uL16"/>
</dbReference>
<dbReference type="InterPro" id="IPR000114">
    <property type="entry name" value="Ribosomal_uL16_bact-type"/>
</dbReference>
<dbReference type="InterPro" id="IPR020798">
    <property type="entry name" value="Ribosomal_uL16_CS"/>
</dbReference>
<dbReference type="InterPro" id="IPR016180">
    <property type="entry name" value="Ribosomal_uL16_dom"/>
</dbReference>
<dbReference type="InterPro" id="IPR036920">
    <property type="entry name" value="Ribosomal_uL16_sf"/>
</dbReference>
<dbReference type="NCBIfam" id="TIGR01164">
    <property type="entry name" value="rplP_bact"/>
    <property type="match status" value="1"/>
</dbReference>
<dbReference type="PANTHER" id="PTHR12220">
    <property type="entry name" value="50S/60S RIBOSOMAL PROTEIN L16"/>
    <property type="match status" value="1"/>
</dbReference>
<dbReference type="PANTHER" id="PTHR12220:SF13">
    <property type="entry name" value="LARGE RIBOSOMAL SUBUNIT PROTEIN UL16M"/>
    <property type="match status" value="1"/>
</dbReference>
<dbReference type="Pfam" id="PF00252">
    <property type="entry name" value="Ribosomal_L16"/>
    <property type="match status" value="1"/>
</dbReference>
<dbReference type="PRINTS" id="PR00060">
    <property type="entry name" value="RIBOSOMALL16"/>
</dbReference>
<dbReference type="SUPFAM" id="SSF54686">
    <property type="entry name" value="Ribosomal protein L16p/L10e"/>
    <property type="match status" value="1"/>
</dbReference>
<dbReference type="PROSITE" id="PS00701">
    <property type="entry name" value="RIBOSOMAL_L16_2"/>
    <property type="match status" value="1"/>
</dbReference>